<sequence>MLISHSDLNQQLKSAGIGFNATELHGFLSGLLCGGLKDQSWLPLLYQFSNDNHAYPTGLVQPVTELYEQISQTLSDVEGFTFELGLTEDENVFTQADSLSDWANQFLLGIGLAQPELAKEKGEIGEAVDDLQDICQLGYDEDDNEEELAEALEEIIEYVRTIAMLFYSHFNEGEIESKPVLH</sequence>
<proteinExistence type="evidence at protein level"/>
<comment type="similarity">
    <text evidence="1">Belongs to the UPF0149 family.</text>
</comment>
<feature type="chain" id="PRO_0000207561" description="UPF0149 protein HI_0817">
    <location>
        <begin position="1"/>
        <end position="182"/>
    </location>
</feature>
<feature type="helix" evidence="2">
    <location>
        <begin position="5"/>
        <end position="14"/>
    </location>
</feature>
<feature type="helix" evidence="2">
    <location>
        <begin position="21"/>
        <end position="33"/>
    </location>
</feature>
<feature type="helix" evidence="2">
    <location>
        <begin position="41"/>
        <end position="49"/>
    </location>
</feature>
<feature type="turn" evidence="2">
    <location>
        <begin position="57"/>
        <end position="59"/>
    </location>
</feature>
<feature type="helix" evidence="2">
    <location>
        <begin position="60"/>
        <end position="74"/>
    </location>
</feature>
<feature type="turn" evidence="2">
    <location>
        <begin position="75"/>
        <end position="78"/>
    </location>
</feature>
<feature type="helix" evidence="2">
    <location>
        <begin position="92"/>
        <end position="113"/>
    </location>
</feature>
<feature type="helix" evidence="2">
    <location>
        <begin position="117"/>
        <end position="119"/>
    </location>
</feature>
<feature type="helix" evidence="2">
    <location>
        <begin position="122"/>
        <end position="134"/>
    </location>
</feature>
<feature type="helix" evidence="2">
    <location>
        <begin position="146"/>
        <end position="170"/>
    </location>
</feature>
<keyword id="KW-0002">3D-structure</keyword>
<keyword id="KW-1185">Reference proteome</keyword>
<reference key="1">
    <citation type="journal article" date="1995" name="Science">
        <title>Whole-genome random sequencing and assembly of Haemophilus influenzae Rd.</title>
        <authorList>
            <person name="Fleischmann R.D."/>
            <person name="Adams M.D."/>
            <person name="White O."/>
            <person name="Clayton R.A."/>
            <person name="Kirkness E.F."/>
            <person name="Kerlavage A.R."/>
            <person name="Bult C.J."/>
            <person name="Tomb J.-F."/>
            <person name="Dougherty B.A."/>
            <person name="Merrick J.M."/>
            <person name="McKenney K."/>
            <person name="Sutton G.G."/>
            <person name="FitzHugh W."/>
            <person name="Fields C.A."/>
            <person name="Gocayne J.D."/>
            <person name="Scott J.D."/>
            <person name="Shirley R."/>
            <person name="Liu L.-I."/>
            <person name="Glodek A."/>
            <person name="Kelley J.M."/>
            <person name="Weidman J.F."/>
            <person name="Phillips C.A."/>
            <person name="Spriggs T."/>
            <person name="Hedblom E."/>
            <person name="Cotton M.D."/>
            <person name="Utterback T.R."/>
            <person name="Hanna M.C."/>
            <person name="Nguyen D.T."/>
            <person name="Saudek D.M."/>
            <person name="Brandon R.C."/>
            <person name="Fine L.D."/>
            <person name="Fritchman J.L."/>
            <person name="Fuhrmann J.L."/>
            <person name="Geoghagen N.S.M."/>
            <person name="Gnehm C.L."/>
            <person name="McDonald L.A."/>
            <person name="Small K.V."/>
            <person name="Fraser C.M."/>
            <person name="Smith H.O."/>
            <person name="Venter J.C."/>
        </authorList>
    </citation>
    <scope>NUCLEOTIDE SEQUENCE [LARGE SCALE GENOMIC DNA]</scope>
    <source>
        <strain>ATCC 51907 / DSM 11121 / KW20 / Rd</strain>
    </source>
</reference>
<protein>
    <recommendedName>
        <fullName>UPF0149 protein HI_0817</fullName>
    </recommendedName>
</protein>
<accession>P44882</accession>
<organism>
    <name type="scientific">Haemophilus influenzae (strain ATCC 51907 / DSM 11121 / KW20 / Rd)</name>
    <dbReference type="NCBI Taxonomy" id="71421"/>
    <lineage>
        <taxon>Bacteria</taxon>
        <taxon>Pseudomonadati</taxon>
        <taxon>Pseudomonadota</taxon>
        <taxon>Gammaproteobacteria</taxon>
        <taxon>Pasteurellales</taxon>
        <taxon>Pasteurellaceae</taxon>
        <taxon>Haemophilus</taxon>
    </lineage>
</organism>
<name>Y817_HAEIN</name>
<gene>
    <name type="ordered locus">HI_0817</name>
</gene>
<dbReference type="EMBL" id="L42023">
    <property type="protein sequence ID" value="AAC22476.1"/>
    <property type="molecule type" value="Genomic_DNA"/>
</dbReference>
<dbReference type="PIR" id="I64158">
    <property type="entry name" value="I64158"/>
</dbReference>
<dbReference type="RefSeq" id="NP_438977.1">
    <property type="nucleotide sequence ID" value="NC_000907.1"/>
</dbReference>
<dbReference type="PDB" id="1IZM">
    <property type="method" value="X-ray"/>
    <property type="resolution" value="1.95 A"/>
    <property type="chains" value="A=1-182"/>
</dbReference>
<dbReference type="PDBsum" id="1IZM"/>
<dbReference type="SMR" id="P44882"/>
<dbReference type="STRING" id="71421.HI_0817"/>
<dbReference type="EnsemblBacteria" id="AAC22476">
    <property type="protein sequence ID" value="AAC22476"/>
    <property type="gene ID" value="HI_0817"/>
</dbReference>
<dbReference type="KEGG" id="hin:HI_0817"/>
<dbReference type="PATRIC" id="fig|71421.8.peg.858"/>
<dbReference type="eggNOG" id="COG3079">
    <property type="taxonomic scope" value="Bacteria"/>
</dbReference>
<dbReference type="HOGENOM" id="CLU_085336_1_0_6"/>
<dbReference type="OrthoDB" id="9783391at2"/>
<dbReference type="PhylomeDB" id="P44882"/>
<dbReference type="BioCyc" id="HINF71421:G1GJ1-858-MONOMER"/>
<dbReference type="EvolutionaryTrace" id="P44882"/>
<dbReference type="Proteomes" id="UP000000579">
    <property type="component" value="Chromosome"/>
</dbReference>
<dbReference type="GO" id="GO:0005829">
    <property type="term" value="C:cytosol"/>
    <property type="evidence" value="ECO:0000318"/>
    <property type="project" value="GO_Central"/>
</dbReference>
<dbReference type="FunFam" id="1.20.120.740:FF:000001">
    <property type="entry name" value="UPF0149 protein YgfB"/>
    <property type="match status" value="1"/>
</dbReference>
<dbReference type="Gene3D" id="1.20.120.740">
    <property type="entry name" value="YgfB uncharacterised protein family UPF0149, PF03695"/>
    <property type="match status" value="1"/>
</dbReference>
<dbReference type="HAMAP" id="MF_00346">
    <property type="entry name" value="UPF0149"/>
    <property type="match status" value="1"/>
</dbReference>
<dbReference type="InterPro" id="IPR011978">
    <property type="entry name" value="YgfB-like"/>
</dbReference>
<dbReference type="InterPro" id="IPR036255">
    <property type="entry name" value="YgfB-like_sf"/>
</dbReference>
<dbReference type="NCBIfam" id="NF002477">
    <property type="entry name" value="PRK01736.1"/>
    <property type="match status" value="1"/>
</dbReference>
<dbReference type="NCBIfam" id="TIGR02292">
    <property type="entry name" value="ygfB_yecA"/>
    <property type="match status" value="1"/>
</dbReference>
<dbReference type="PANTHER" id="PTHR37528">
    <property type="entry name" value="UPF0149 PROTEIN YGFB"/>
    <property type="match status" value="1"/>
</dbReference>
<dbReference type="PANTHER" id="PTHR37528:SF1">
    <property type="entry name" value="UPF0149 PROTEIN YGFB"/>
    <property type="match status" value="1"/>
</dbReference>
<dbReference type="Pfam" id="PF03695">
    <property type="entry name" value="UPF0149"/>
    <property type="match status" value="1"/>
</dbReference>
<dbReference type="SUPFAM" id="SSF101327">
    <property type="entry name" value="YgfB-like"/>
    <property type="match status" value="1"/>
</dbReference>
<evidence type="ECO:0000305" key="1"/>
<evidence type="ECO:0007829" key="2">
    <source>
        <dbReference type="PDB" id="1IZM"/>
    </source>
</evidence>